<sequence>MAETDPKTVQDLTSVVQTLLQQMQDKFQTMSDQIIGRIDDMSSRIDDLEKNIADLMTQAGVEELDSENKIPATQKS</sequence>
<organism>
    <name type="scientific">Bos taurus</name>
    <name type="common">Bovine</name>
    <dbReference type="NCBI Taxonomy" id="9913"/>
    <lineage>
        <taxon>Eukaryota</taxon>
        <taxon>Metazoa</taxon>
        <taxon>Chordata</taxon>
        <taxon>Craniata</taxon>
        <taxon>Vertebrata</taxon>
        <taxon>Euteleostomi</taxon>
        <taxon>Mammalia</taxon>
        <taxon>Eutheria</taxon>
        <taxon>Laurasiatheria</taxon>
        <taxon>Artiodactyla</taxon>
        <taxon>Ruminantia</taxon>
        <taxon>Pecora</taxon>
        <taxon>Bovidae</taxon>
        <taxon>Bovinae</taxon>
        <taxon>Bos</taxon>
    </lineage>
</organism>
<name>HSBP1_BOVIN</name>
<accession>Q3ZC22</accession>
<reference key="1">
    <citation type="submission" date="2005-08" db="EMBL/GenBank/DDBJ databases">
        <authorList>
            <consortium name="NIH - Mammalian Gene Collection (MGC) project"/>
        </authorList>
    </citation>
    <scope>NUCLEOTIDE SEQUENCE [LARGE SCALE MRNA]</scope>
    <source>
        <strain>Crossbred X Angus</strain>
        <tissue>Ileum</tissue>
    </source>
</reference>
<protein>
    <recommendedName>
        <fullName>Heat shock factor-binding protein 1</fullName>
    </recommendedName>
</protein>
<proteinExistence type="inferred from homology"/>
<dbReference type="EMBL" id="BC102970">
    <property type="protein sequence ID" value="AAI02971.1"/>
    <property type="molecule type" value="mRNA"/>
</dbReference>
<dbReference type="RefSeq" id="NP_001106787.1">
    <property type="nucleotide sequence ID" value="NM_001113316.2"/>
</dbReference>
<dbReference type="RefSeq" id="XP_005218458.1">
    <property type="nucleotide sequence ID" value="XM_005218401.5"/>
</dbReference>
<dbReference type="SMR" id="Q3ZC22"/>
<dbReference type="FunCoup" id="Q3ZC22">
    <property type="interactions" value="589"/>
</dbReference>
<dbReference type="STRING" id="9913.ENSBTAP00000059922"/>
<dbReference type="PaxDb" id="9913-ENSBTAP00000034543"/>
<dbReference type="Ensembl" id="ENSBTAT00000079124.2">
    <property type="protein sequence ID" value="ENSBTAP00000068641.1"/>
    <property type="gene ID" value="ENSBTAG00000053436.2"/>
</dbReference>
<dbReference type="GeneID" id="767979"/>
<dbReference type="KEGG" id="bta:767979"/>
<dbReference type="CTD" id="3281"/>
<dbReference type="VEuPathDB" id="HostDB:ENSBTAG00000053436"/>
<dbReference type="eggNOG" id="KOG4117">
    <property type="taxonomic scope" value="Eukaryota"/>
</dbReference>
<dbReference type="GeneTree" id="ENSGT00390000006293"/>
<dbReference type="HOGENOM" id="CLU_149552_2_0_1"/>
<dbReference type="InParanoid" id="Q3ZC22"/>
<dbReference type="OMA" id="MERANMD"/>
<dbReference type="OrthoDB" id="4159489at2759"/>
<dbReference type="TreeFam" id="TF314005"/>
<dbReference type="Reactome" id="R-BTA-3371568">
    <property type="pathway name" value="Attenuation phase"/>
</dbReference>
<dbReference type="Reactome" id="R-BTA-3371571">
    <property type="pathway name" value="HSF1-dependent transactivation"/>
</dbReference>
<dbReference type="Proteomes" id="UP000009136">
    <property type="component" value="Chromosome 18"/>
</dbReference>
<dbReference type="Bgee" id="ENSBTAG00000053436">
    <property type="expression patterns" value="Expressed in occipital lobe and 107 other cell types or tissues"/>
</dbReference>
<dbReference type="GO" id="GO:1904115">
    <property type="term" value="C:axon cytoplasm"/>
    <property type="evidence" value="ECO:0007669"/>
    <property type="project" value="GOC"/>
</dbReference>
<dbReference type="GO" id="GO:0005829">
    <property type="term" value="C:cytosol"/>
    <property type="evidence" value="ECO:0000318"/>
    <property type="project" value="GO_Central"/>
</dbReference>
<dbReference type="GO" id="GO:0005634">
    <property type="term" value="C:nucleus"/>
    <property type="evidence" value="ECO:0000318"/>
    <property type="project" value="GO_Central"/>
</dbReference>
<dbReference type="GO" id="GO:0042802">
    <property type="term" value="F:identical protein binding"/>
    <property type="evidence" value="ECO:0007669"/>
    <property type="project" value="Ensembl"/>
</dbReference>
<dbReference type="GO" id="GO:0003714">
    <property type="term" value="F:transcription corepressor activity"/>
    <property type="evidence" value="ECO:0007669"/>
    <property type="project" value="InterPro"/>
</dbReference>
<dbReference type="GO" id="GO:0019896">
    <property type="term" value="P:axonal transport of mitochondrion"/>
    <property type="evidence" value="ECO:0007669"/>
    <property type="project" value="Ensembl"/>
</dbReference>
<dbReference type="GO" id="GO:0070370">
    <property type="term" value="P:cellular heat acclimation"/>
    <property type="evidence" value="ECO:0000318"/>
    <property type="project" value="GO_Central"/>
</dbReference>
<dbReference type="FunFam" id="1.20.5.430:FF:000002">
    <property type="entry name" value="Heat shock factor-binding protein 1"/>
    <property type="match status" value="1"/>
</dbReference>
<dbReference type="Gene3D" id="1.20.5.430">
    <property type="match status" value="1"/>
</dbReference>
<dbReference type="InterPro" id="IPR009643">
    <property type="entry name" value="HS1-bd"/>
</dbReference>
<dbReference type="PANTHER" id="PTHR19424">
    <property type="entry name" value="HEAT SHOCK FACTOR BINDING PROTEIN 1"/>
    <property type="match status" value="1"/>
</dbReference>
<dbReference type="PANTHER" id="PTHR19424:SF3">
    <property type="entry name" value="HEAT SHOCK FACTOR-BINDING PROTEIN 1"/>
    <property type="match status" value="1"/>
</dbReference>
<dbReference type="Pfam" id="PF06825">
    <property type="entry name" value="HSBP1"/>
    <property type="match status" value="1"/>
</dbReference>
<gene>
    <name type="primary">HSBP1</name>
</gene>
<keyword id="KW-0539">Nucleus</keyword>
<keyword id="KW-1185">Reference proteome</keyword>
<comment type="function">
    <text evidence="1">Negative regulator of the heat shock response. Negatively affects HSF1 DNA-binding activity. May have a role in the suppression of the activation of the stress response during the aging process (By similarity).</text>
</comment>
<comment type="subunit">
    <text evidence="1">Homohexamer. Associates with heptad repeats of HSF1 trimers and probably also HSF1 monomers, and with HSP70. Association with HSF1 trimers and HSP70 coincides with attenuation of heat shock response and the conversion of HSF1 trimer to monomer (By similarity).</text>
</comment>
<comment type="subcellular location">
    <subcellularLocation>
        <location evidence="1">Nucleus</location>
    </subcellularLocation>
</comment>
<comment type="similarity">
    <text evidence="2">Belongs to the HSBP1 family.</text>
</comment>
<evidence type="ECO:0000250" key="1"/>
<evidence type="ECO:0000305" key="2"/>
<feature type="chain" id="PRO_0000245859" description="Heat shock factor-binding protein 1">
    <location>
        <begin position="1"/>
        <end position="76"/>
    </location>
</feature>